<reference evidence="4" key="1">
    <citation type="journal article" date="2000" name="Science">
        <title>The genome sequence of Drosophila melanogaster.</title>
        <authorList>
            <person name="Adams M.D."/>
            <person name="Celniker S.E."/>
            <person name="Holt R.A."/>
            <person name="Evans C.A."/>
            <person name="Gocayne J.D."/>
            <person name="Amanatides P.G."/>
            <person name="Scherer S.E."/>
            <person name="Li P.W."/>
            <person name="Hoskins R.A."/>
            <person name="Galle R.F."/>
            <person name="George R.A."/>
            <person name="Lewis S.E."/>
            <person name="Richards S."/>
            <person name="Ashburner M."/>
            <person name="Henderson S.N."/>
            <person name="Sutton G.G."/>
            <person name="Wortman J.R."/>
            <person name="Yandell M.D."/>
            <person name="Zhang Q."/>
            <person name="Chen L.X."/>
            <person name="Brandon R.C."/>
            <person name="Rogers Y.-H.C."/>
            <person name="Blazej R.G."/>
            <person name="Champe M."/>
            <person name="Pfeiffer B.D."/>
            <person name="Wan K.H."/>
            <person name="Doyle C."/>
            <person name="Baxter E.G."/>
            <person name="Helt G."/>
            <person name="Nelson C.R."/>
            <person name="Miklos G.L.G."/>
            <person name="Abril J.F."/>
            <person name="Agbayani A."/>
            <person name="An H.-J."/>
            <person name="Andrews-Pfannkoch C."/>
            <person name="Baldwin D."/>
            <person name="Ballew R.M."/>
            <person name="Basu A."/>
            <person name="Baxendale J."/>
            <person name="Bayraktaroglu L."/>
            <person name="Beasley E.M."/>
            <person name="Beeson K.Y."/>
            <person name="Benos P.V."/>
            <person name="Berman B.P."/>
            <person name="Bhandari D."/>
            <person name="Bolshakov S."/>
            <person name="Borkova D."/>
            <person name="Botchan M.R."/>
            <person name="Bouck J."/>
            <person name="Brokstein P."/>
            <person name="Brottier P."/>
            <person name="Burtis K.C."/>
            <person name="Busam D.A."/>
            <person name="Butler H."/>
            <person name="Cadieu E."/>
            <person name="Center A."/>
            <person name="Chandra I."/>
            <person name="Cherry J.M."/>
            <person name="Cawley S."/>
            <person name="Dahlke C."/>
            <person name="Davenport L.B."/>
            <person name="Davies P."/>
            <person name="de Pablos B."/>
            <person name="Delcher A."/>
            <person name="Deng Z."/>
            <person name="Mays A.D."/>
            <person name="Dew I."/>
            <person name="Dietz S.M."/>
            <person name="Dodson K."/>
            <person name="Doup L.E."/>
            <person name="Downes M."/>
            <person name="Dugan-Rocha S."/>
            <person name="Dunkov B.C."/>
            <person name="Dunn P."/>
            <person name="Durbin K.J."/>
            <person name="Evangelista C.C."/>
            <person name="Ferraz C."/>
            <person name="Ferriera S."/>
            <person name="Fleischmann W."/>
            <person name="Fosler C."/>
            <person name="Gabrielian A.E."/>
            <person name="Garg N.S."/>
            <person name="Gelbart W.M."/>
            <person name="Glasser K."/>
            <person name="Glodek A."/>
            <person name="Gong F."/>
            <person name="Gorrell J.H."/>
            <person name="Gu Z."/>
            <person name="Guan P."/>
            <person name="Harris M."/>
            <person name="Harris N.L."/>
            <person name="Harvey D.A."/>
            <person name="Heiman T.J."/>
            <person name="Hernandez J.R."/>
            <person name="Houck J."/>
            <person name="Hostin D."/>
            <person name="Houston K.A."/>
            <person name="Howland T.J."/>
            <person name="Wei M.-H."/>
            <person name="Ibegwam C."/>
            <person name="Jalali M."/>
            <person name="Kalush F."/>
            <person name="Karpen G.H."/>
            <person name="Ke Z."/>
            <person name="Kennison J.A."/>
            <person name="Ketchum K.A."/>
            <person name="Kimmel B.E."/>
            <person name="Kodira C.D."/>
            <person name="Kraft C.L."/>
            <person name="Kravitz S."/>
            <person name="Kulp D."/>
            <person name="Lai Z."/>
            <person name="Lasko P."/>
            <person name="Lei Y."/>
            <person name="Levitsky A.A."/>
            <person name="Li J.H."/>
            <person name="Li Z."/>
            <person name="Liang Y."/>
            <person name="Lin X."/>
            <person name="Liu X."/>
            <person name="Mattei B."/>
            <person name="McIntosh T.C."/>
            <person name="McLeod M.P."/>
            <person name="McPherson D."/>
            <person name="Merkulov G."/>
            <person name="Milshina N.V."/>
            <person name="Mobarry C."/>
            <person name="Morris J."/>
            <person name="Moshrefi A."/>
            <person name="Mount S.M."/>
            <person name="Moy M."/>
            <person name="Murphy B."/>
            <person name="Murphy L."/>
            <person name="Muzny D.M."/>
            <person name="Nelson D.L."/>
            <person name="Nelson D.R."/>
            <person name="Nelson K.A."/>
            <person name="Nixon K."/>
            <person name="Nusskern D.R."/>
            <person name="Pacleb J.M."/>
            <person name="Palazzolo M."/>
            <person name="Pittman G.S."/>
            <person name="Pan S."/>
            <person name="Pollard J."/>
            <person name="Puri V."/>
            <person name="Reese M.G."/>
            <person name="Reinert K."/>
            <person name="Remington K."/>
            <person name="Saunders R.D.C."/>
            <person name="Scheeler F."/>
            <person name="Shen H."/>
            <person name="Shue B.C."/>
            <person name="Siden-Kiamos I."/>
            <person name="Simpson M."/>
            <person name="Skupski M.P."/>
            <person name="Smith T.J."/>
            <person name="Spier E."/>
            <person name="Spradling A.C."/>
            <person name="Stapleton M."/>
            <person name="Strong R."/>
            <person name="Sun E."/>
            <person name="Svirskas R."/>
            <person name="Tector C."/>
            <person name="Turner R."/>
            <person name="Venter E."/>
            <person name="Wang A.H."/>
            <person name="Wang X."/>
            <person name="Wang Z.-Y."/>
            <person name="Wassarman D.A."/>
            <person name="Weinstock G.M."/>
            <person name="Weissenbach J."/>
            <person name="Williams S.M."/>
            <person name="Woodage T."/>
            <person name="Worley K.C."/>
            <person name="Wu D."/>
            <person name="Yang S."/>
            <person name="Yao Q.A."/>
            <person name="Ye J."/>
            <person name="Yeh R.-F."/>
            <person name="Zaveri J.S."/>
            <person name="Zhan M."/>
            <person name="Zhang G."/>
            <person name="Zhao Q."/>
            <person name="Zheng L."/>
            <person name="Zheng X.H."/>
            <person name="Zhong F.N."/>
            <person name="Zhong W."/>
            <person name="Zhou X."/>
            <person name="Zhu S.C."/>
            <person name="Zhu X."/>
            <person name="Smith H.O."/>
            <person name="Gibbs R.A."/>
            <person name="Myers E.W."/>
            <person name="Rubin G.M."/>
            <person name="Venter J.C."/>
        </authorList>
    </citation>
    <scope>NUCLEOTIDE SEQUENCE [LARGE SCALE GENOMIC DNA]</scope>
    <source>
        <strain>Berkeley</strain>
    </source>
</reference>
<reference evidence="3 4" key="2">
    <citation type="journal article" date="2002" name="Genome Biol.">
        <title>Annotation of the Drosophila melanogaster euchromatic genome: a systematic review.</title>
        <authorList>
            <person name="Misra S."/>
            <person name="Crosby M.A."/>
            <person name="Mungall C.J."/>
            <person name="Matthews B.B."/>
            <person name="Campbell K.S."/>
            <person name="Hradecky P."/>
            <person name="Huang Y."/>
            <person name="Kaminker J.S."/>
            <person name="Millburn G.H."/>
            <person name="Prochnik S.E."/>
            <person name="Smith C.D."/>
            <person name="Tupy J.L."/>
            <person name="Whitfield E.J."/>
            <person name="Bayraktaroglu L."/>
            <person name="Berman B.P."/>
            <person name="Bettencourt B.R."/>
            <person name="Celniker S.E."/>
            <person name="de Grey A.D.N.J."/>
            <person name="Drysdale R.A."/>
            <person name="Harris N.L."/>
            <person name="Richter J."/>
            <person name="Russo S."/>
            <person name="Schroeder A.J."/>
            <person name="Shu S.Q."/>
            <person name="Stapleton M."/>
            <person name="Yamada C."/>
            <person name="Ashburner M."/>
            <person name="Gelbart W.M."/>
            <person name="Rubin G.M."/>
            <person name="Lewis S.E."/>
        </authorList>
    </citation>
    <scope>GENOME REANNOTATION</scope>
    <source>
        <strain>Berkeley</strain>
    </source>
</reference>
<reference evidence="3 5" key="3">
    <citation type="submission" date="2006-06" db="EMBL/GenBank/DDBJ databases">
        <authorList>
            <person name="Stapleton M."/>
            <person name="Carlson J.W."/>
            <person name="Chavez C."/>
            <person name="Frise E."/>
            <person name="George R.A."/>
            <person name="Pacleb J.M."/>
            <person name="Park S."/>
            <person name="Wan K.H."/>
            <person name="Yu C."/>
            <person name="Celniker S.E."/>
        </authorList>
    </citation>
    <scope>NUCLEOTIDE SEQUENCE [LARGE SCALE MRNA]</scope>
    <source>
        <strain>Berkeley</strain>
    </source>
</reference>
<proteinExistence type="evidence at transcript level"/>
<name>DM7B_DROME</name>
<sequence length="571" mass="64209">MAKRGKKGGIPRAEMVQVASANRDENQVTELKKADYLPYLFNLVMPKMFFKSPNRIVMARLYPDVHKHDQQSAEYFEGFQAPCFDLPASLFPDNAPIDKIVFMPTVMLPMGFEAGGVFGPGVLPRDCYPVDLIRTEHEGPMPPLFVGLRSMNISLASMIDSFLDMYDNPEGEDAFVYEMHATDHHYDDDITEELMLRPDFTLSVAYSLPATMRLPSPYPYPCVQAQDNIYTPDLSKVLMLMPHQLNITVSILSTVNNPHVPSVAFATMCDEEECPTFDLPTDVFPICEGVNRPIFLPKRFMPKGFEACCVFKPGSLSELWFIKRIGRFGTPQQQHNCTITPPLFVGKYSRDGECTDMIEEIRMNFDKKARESAKSIASLTLETLGGLSRHITSTKGFLVMESDKPTPPAGAYSVESYEEASEDGCIAKVTKECASKITDTRDDGINTADYQSQFPELEPEPEPEPEDEGEDVANKKKCLSCFKIDSDIDVMSHAIAELTVAELSMLGEENPVPGVDTELALDQLREVLENRGEIRSNTDDLMRDHIYRMERDLMLALRQPIRKCCECTVNF</sequence>
<accession>Q9W3M2</accession>
<accession>Q7KVT7</accession>
<evidence type="ECO:0000255" key="1"/>
<evidence type="ECO:0000256" key="2">
    <source>
        <dbReference type="SAM" id="MobiDB-lite"/>
    </source>
</evidence>
<evidence type="ECO:0000305" key="3"/>
<evidence type="ECO:0000312" key="4">
    <source>
        <dbReference type="EMBL" id="AAF46303.1"/>
    </source>
</evidence>
<evidence type="ECO:0000312" key="5">
    <source>
        <dbReference type="EMBL" id="ABF85751.1"/>
    </source>
</evidence>
<comment type="similarity">
    <text evidence="1">Belongs to the DM7 family.</text>
</comment>
<keyword id="KW-1185">Reference proteome</keyword>
<keyword id="KW-0677">Repeat</keyword>
<feature type="chain" id="PRO_0000378608" description="DM7 family protein CG15332">
    <location>
        <begin position="1"/>
        <end position="571"/>
    </location>
</feature>
<feature type="region of interest" description="Disordered" evidence="2">
    <location>
        <begin position="440"/>
        <end position="472"/>
    </location>
</feature>
<feature type="compositionally biased region" description="Acidic residues" evidence="2">
    <location>
        <begin position="457"/>
        <end position="471"/>
    </location>
</feature>
<organism>
    <name type="scientific">Drosophila melanogaster</name>
    <name type="common">Fruit fly</name>
    <dbReference type="NCBI Taxonomy" id="7227"/>
    <lineage>
        <taxon>Eukaryota</taxon>
        <taxon>Metazoa</taxon>
        <taxon>Ecdysozoa</taxon>
        <taxon>Arthropoda</taxon>
        <taxon>Hexapoda</taxon>
        <taxon>Insecta</taxon>
        <taxon>Pterygota</taxon>
        <taxon>Neoptera</taxon>
        <taxon>Endopterygota</taxon>
        <taxon>Diptera</taxon>
        <taxon>Brachycera</taxon>
        <taxon>Muscomorpha</taxon>
        <taxon>Ephydroidea</taxon>
        <taxon>Drosophilidae</taxon>
        <taxon>Drosophila</taxon>
        <taxon>Sophophora</taxon>
    </lineage>
</organism>
<dbReference type="EMBL" id="AE014298">
    <property type="protein sequence ID" value="AAF46303.1"/>
    <property type="molecule type" value="Genomic_DNA"/>
</dbReference>
<dbReference type="EMBL" id="BT025851">
    <property type="protein sequence ID" value="ABF85751.1"/>
    <property type="molecule type" value="mRNA"/>
</dbReference>
<dbReference type="RefSeq" id="NP_572429.1">
    <property type="nucleotide sequence ID" value="NM_132201.2"/>
</dbReference>
<dbReference type="SMR" id="Q9W3M2"/>
<dbReference type="GlyGen" id="Q9W3M2">
    <property type="glycosylation" value="2 sites"/>
</dbReference>
<dbReference type="PaxDb" id="7227-FBpp0071079"/>
<dbReference type="DNASU" id="31714"/>
<dbReference type="EnsemblMetazoa" id="FBtr0071127">
    <property type="protein sequence ID" value="FBpp0071079"/>
    <property type="gene ID" value="FBgn0029986"/>
</dbReference>
<dbReference type="GeneID" id="31714"/>
<dbReference type="KEGG" id="dme:Dmel_CG15332"/>
<dbReference type="UCSC" id="CG15332-RA">
    <property type="organism name" value="d. melanogaster"/>
</dbReference>
<dbReference type="UCSC" id="CG15332-RB">
    <property type="organism name" value="d. melanogaster"/>
</dbReference>
<dbReference type="AGR" id="FB:FBgn0029986"/>
<dbReference type="FlyBase" id="FBgn0029986">
    <property type="gene designation" value="CG15332"/>
</dbReference>
<dbReference type="VEuPathDB" id="VectorBase:FBgn0029986"/>
<dbReference type="eggNOG" id="ENOG502QRB1">
    <property type="taxonomic scope" value="Eukaryota"/>
</dbReference>
<dbReference type="GeneTree" id="ENSGT00540000073740"/>
<dbReference type="HOGENOM" id="CLU_477581_0_0_1"/>
<dbReference type="InParanoid" id="Q9W3M2"/>
<dbReference type="OMA" id="NTADYQS"/>
<dbReference type="OrthoDB" id="7867651at2759"/>
<dbReference type="PhylomeDB" id="Q9W3M2"/>
<dbReference type="BioGRID-ORCS" id="31714">
    <property type="hits" value="0 hits in 1 CRISPR screen"/>
</dbReference>
<dbReference type="GenomeRNAi" id="31714"/>
<dbReference type="PRO" id="PR:Q9W3M2"/>
<dbReference type="Proteomes" id="UP000000803">
    <property type="component" value="Chromosome X"/>
</dbReference>
<dbReference type="Bgee" id="FBgn0029986">
    <property type="expression patterns" value="Expressed in spermatocyte in testis and 15 other cell types or tissues"/>
</dbReference>
<dbReference type="InterPro" id="IPR006610">
    <property type="entry name" value="DM7"/>
</dbReference>
<dbReference type="SMART" id="SM00688">
    <property type="entry name" value="DM7"/>
    <property type="match status" value="2"/>
</dbReference>
<gene>
    <name type="ORF">CG15332</name>
</gene>
<protein>
    <recommendedName>
        <fullName>DM7 family protein CG15332</fullName>
    </recommendedName>
</protein>